<proteinExistence type="evidence at protein level"/>
<accession>P91645</accession>
<accession>O01713</accession>
<accession>O01714</accession>
<accession>Q76NR8</accession>
<accession>Q76NR9</accession>
<accession>Q76NS0</accession>
<accession>Q9VYR8</accession>
<evidence type="ECO:0000250" key="1"/>
<evidence type="ECO:0000250" key="2">
    <source>
        <dbReference type="UniProtKB" id="O00555"/>
    </source>
</evidence>
<evidence type="ECO:0000255" key="3"/>
<evidence type="ECO:0000255" key="4">
    <source>
        <dbReference type="PROSITE-ProRule" id="PRU00448"/>
    </source>
</evidence>
<evidence type="ECO:0000256" key="5">
    <source>
        <dbReference type="SAM" id="MobiDB-lite"/>
    </source>
</evidence>
<evidence type="ECO:0000269" key="6">
    <source>
    </source>
</evidence>
<evidence type="ECO:0000269" key="7">
    <source>
    </source>
</evidence>
<evidence type="ECO:0000269" key="8">
    <source>
    </source>
</evidence>
<evidence type="ECO:0000269" key="9">
    <source>
    </source>
</evidence>
<evidence type="ECO:0000269" key="10">
    <source>
    </source>
</evidence>
<evidence type="ECO:0000269" key="11">
    <source>
    </source>
</evidence>
<evidence type="ECO:0000305" key="12"/>
<reference key="1">
    <citation type="journal article" date="1996" name="J. Neurosci.">
        <title>A Drosophila calcium channel alpha1 subunit gene maps to a genetic locus associated with behavioral and visual defects.</title>
        <authorList>
            <person name="Smith L.A."/>
            <person name="Wang X.J."/>
            <person name="Peixoto A.A."/>
            <person name="Neumann E.K."/>
            <person name="Hall L.M."/>
            <person name="Hall J.C."/>
        </authorList>
    </citation>
    <scope>NUCLEOTIDE SEQUENCE [MRNA] (ISOFORM E)</scope>
    <scope>FUNCTION</scope>
    <scope>TISSUE SPECIFICITY</scope>
    <scope>DEVELOPMENTAL STAGE</scope>
</reference>
<reference key="2">
    <citation type="journal article" date="2000" name="Science">
        <title>The genome sequence of Drosophila melanogaster.</title>
        <authorList>
            <person name="Adams M.D."/>
            <person name="Celniker S.E."/>
            <person name="Holt R.A."/>
            <person name="Evans C.A."/>
            <person name="Gocayne J.D."/>
            <person name="Amanatides P.G."/>
            <person name="Scherer S.E."/>
            <person name="Li P.W."/>
            <person name="Hoskins R.A."/>
            <person name="Galle R.F."/>
            <person name="George R.A."/>
            <person name="Lewis S.E."/>
            <person name="Richards S."/>
            <person name="Ashburner M."/>
            <person name="Henderson S.N."/>
            <person name="Sutton G.G."/>
            <person name="Wortman J.R."/>
            <person name="Yandell M.D."/>
            <person name="Zhang Q."/>
            <person name="Chen L.X."/>
            <person name="Brandon R.C."/>
            <person name="Rogers Y.-H.C."/>
            <person name="Blazej R.G."/>
            <person name="Champe M."/>
            <person name="Pfeiffer B.D."/>
            <person name="Wan K.H."/>
            <person name="Doyle C."/>
            <person name="Baxter E.G."/>
            <person name="Helt G."/>
            <person name="Nelson C.R."/>
            <person name="Miklos G.L.G."/>
            <person name="Abril J.F."/>
            <person name="Agbayani A."/>
            <person name="An H.-J."/>
            <person name="Andrews-Pfannkoch C."/>
            <person name="Baldwin D."/>
            <person name="Ballew R.M."/>
            <person name="Basu A."/>
            <person name="Baxendale J."/>
            <person name="Bayraktaroglu L."/>
            <person name="Beasley E.M."/>
            <person name="Beeson K.Y."/>
            <person name="Benos P.V."/>
            <person name="Berman B.P."/>
            <person name="Bhandari D."/>
            <person name="Bolshakov S."/>
            <person name="Borkova D."/>
            <person name="Botchan M.R."/>
            <person name="Bouck J."/>
            <person name="Brokstein P."/>
            <person name="Brottier P."/>
            <person name="Burtis K.C."/>
            <person name="Busam D.A."/>
            <person name="Butler H."/>
            <person name="Cadieu E."/>
            <person name="Center A."/>
            <person name="Chandra I."/>
            <person name="Cherry J.M."/>
            <person name="Cawley S."/>
            <person name="Dahlke C."/>
            <person name="Davenport L.B."/>
            <person name="Davies P."/>
            <person name="de Pablos B."/>
            <person name="Delcher A."/>
            <person name="Deng Z."/>
            <person name="Mays A.D."/>
            <person name="Dew I."/>
            <person name="Dietz S.M."/>
            <person name="Dodson K."/>
            <person name="Doup L.E."/>
            <person name="Downes M."/>
            <person name="Dugan-Rocha S."/>
            <person name="Dunkov B.C."/>
            <person name="Dunn P."/>
            <person name="Durbin K.J."/>
            <person name="Evangelista C.C."/>
            <person name="Ferraz C."/>
            <person name="Ferriera S."/>
            <person name="Fleischmann W."/>
            <person name="Fosler C."/>
            <person name="Gabrielian A.E."/>
            <person name="Garg N.S."/>
            <person name="Gelbart W.M."/>
            <person name="Glasser K."/>
            <person name="Glodek A."/>
            <person name="Gong F."/>
            <person name="Gorrell J.H."/>
            <person name="Gu Z."/>
            <person name="Guan P."/>
            <person name="Harris M."/>
            <person name="Harris N.L."/>
            <person name="Harvey D.A."/>
            <person name="Heiman T.J."/>
            <person name="Hernandez J.R."/>
            <person name="Houck J."/>
            <person name="Hostin D."/>
            <person name="Houston K.A."/>
            <person name="Howland T.J."/>
            <person name="Wei M.-H."/>
            <person name="Ibegwam C."/>
            <person name="Jalali M."/>
            <person name="Kalush F."/>
            <person name="Karpen G.H."/>
            <person name="Ke Z."/>
            <person name="Kennison J.A."/>
            <person name="Ketchum K.A."/>
            <person name="Kimmel B.E."/>
            <person name="Kodira C.D."/>
            <person name="Kraft C.L."/>
            <person name="Kravitz S."/>
            <person name="Kulp D."/>
            <person name="Lai Z."/>
            <person name="Lasko P."/>
            <person name="Lei Y."/>
            <person name="Levitsky A.A."/>
            <person name="Li J.H."/>
            <person name="Li Z."/>
            <person name="Liang Y."/>
            <person name="Lin X."/>
            <person name="Liu X."/>
            <person name="Mattei B."/>
            <person name="McIntosh T.C."/>
            <person name="McLeod M.P."/>
            <person name="McPherson D."/>
            <person name="Merkulov G."/>
            <person name="Milshina N.V."/>
            <person name="Mobarry C."/>
            <person name="Morris J."/>
            <person name="Moshrefi A."/>
            <person name="Mount S.M."/>
            <person name="Moy M."/>
            <person name="Murphy B."/>
            <person name="Murphy L."/>
            <person name="Muzny D.M."/>
            <person name="Nelson D.L."/>
            <person name="Nelson D.R."/>
            <person name="Nelson K.A."/>
            <person name="Nixon K."/>
            <person name="Nusskern D.R."/>
            <person name="Pacleb J.M."/>
            <person name="Palazzolo M."/>
            <person name="Pittman G.S."/>
            <person name="Pan S."/>
            <person name="Pollard J."/>
            <person name="Puri V."/>
            <person name="Reese M.G."/>
            <person name="Reinert K."/>
            <person name="Remington K."/>
            <person name="Saunders R.D.C."/>
            <person name="Scheeler F."/>
            <person name="Shen H."/>
            <person name="Shue B.C."/>
            <person name="Siden-Kiamos I."/>
            <person name="Simpson M."/>
            <person name="Skupski M.P."/>
            <person name="Smith T.J."/>
            <person name="Spier E."/>
            <person name="Spradling A.C."/>
            <person name="Stapleton M."/>
            <person name="Strong R."/>
            <person name="Sun E."/>
            <person name="Svirskas R."/>
            <person name="Tector C."/>
            <person name="Turner R."/>
            <person name="Venter E."/>
            <person name="Wang A.H."/>
            <person name="Wang X."/>
            <person name="Wang Z.-Y."/>
            <person name="Wassarman D.A."/>
            <person name="Weinstock G.M."/>
            <person name="Weissenbach J."/>
            <person name="Williams S.M."/>
            <person name="Woodage T."/>
            <person name="Worley K.C."/>
            <person name="Wu D."/>
            <person name="Yang S."/>
            <person name="Yao Q.A."/>
            <person name="Ye J."/>
            <person name="Yeh R.-F."/>
            <person name="Zaveri J.S."/>
            <person name="Zhan M."/>
            <person name="Zhang G."/>
            <person name="Zhao Q."/>
            <person name="Zheng L."/>
            <person name="Zheng X.H."/>
            <person name="Zhong F.N."/>
            <person name="Zhong W."/>
            <person name="Zhou X."/>
            <person name="Zhu S.C."/>
            <person name="Zhu X."/>
            <person name="Smith H.O."/>
            <person name="Gibbs R.A."/>
            <person name="Myers E.W."/>
            <person name="Rubin G.M."/>
            <person name="Venter J.C."/>
        </authorList>
    </citation>
    <scope>NUCLEOTIDE SEQUENCE [LARGE SCALE GENOMIC DNA]</scope>
    <source>
        <strain>Berkeley</strain>
    </source>
</reference>
<reference key="3">
    <citation type="journal article" date="2002" name="Genome Biol.">
        <title>Annotation of the Drosophila melanogaster euchromatic genome: a systematic review.</title>
        <authorList>
            <person name="Misra S."/>
            <person name="Crosby M.A."/>
            <person name="Mungall C.J."/>
            <person name="Matthews B.B."/>
            <person name="Campbell K.S."/>
            <person name="Hradecky P."/>
            <person name="Huang Y."/>
            <person name="Kaminker J.S."/>
            <person name="Millburn G.H."/>
            <person name="Prochnik S.E."/>
            <person name="Smith C.D."/>
            <person name="Tupy J.L."/>
            <person name="Whitfield E.J."/>
            <person name="Bayraktaroglu L."/>
            <person name="Berman B.P."/>
            <person name="Bettencourt B.R."/>
            <person name="Celniker S.E."/>
            <person name="de Grey A.D.N.J."/>
            <person name="Drysdale R.A."/>
            <person name="Harris N.L."/>
            <person name="Richter J."/>
            <person name="Russo S."/>
            <person name="Schroeder A.J."/>
            <person name="Shu S.Q."/>
            <person name="Stapleton M."/>
            <person name="Yamada C."/>
            <person name="Ashburner M."/>
            <person name="Gelbart W.M."/>
            <person name="Rubin G.M."/>
            <person name="Lewis S.E."/>
        </authorList>
    </citation>
    <scope>GENOME REANNOTATION</scope>
    <scope>ALTERNATIVE SPLICING</scope>
    <source>
        <strain>Berkeley</strain>
    </source>
</reference>
<reference key="4">
    <citation type="journal article" date="1997" name="Genetics">
        <title>Genomic organization and evolution of alternative exons in a Drosophila calcium channel gene.</title>
        <authorList>
            <person name="Peixoto A.A."/>
            <person name="Smith L.A."/>
            <person name="Hall J.C."/>
        </authorList>
    </citation>
    <scope>PARTIAL NUCLEOTIDE SEQUENCE [GENOMIC DNA]</scope>
    <scope>ALTERNATIVE SPLICING</scope>
</reference>
<reference key="5">
    <citation type="journal article" date="2000" name="Cell">
        <title>A-to-I pre-mRNA editing in Drosophila is primarily involved in adult nervous system function and integrity.</title>
        <authorList>
            <person name="Palladino M.J."/>
            <person name="Keegan L.P."/>
            <person name="O'Connell M.A."/>
            <person name="Reenan R.A."/>
        </authorList>
    </citation>
    <scope>RNA EDITING</scope>
</reference>
<reference key="6">
    <citation type="journal article" date="1998" name="Genetics">
        <title>Courtship and visual defects of cacophony mutants reveal functional complexity of a calcium-channel alpha1 subunit in Drosophila.</title>
        <authorList>
            <person name="Smith L.A."/>
            <person name="Peixoto A.A."/>
            <person name="Kramer E.M."/>
            <person name="Villella A."/>
            <person name="Hall J.C."/>
        </authorList>
    </citation>
    <scope>VARIANT ILE-1029</scope>
    <scope>FUNCTION</scope>
</reference>
<reference key="7">
    <citation type="journal article" date="2017" name="PLoS Genet.">
        <title>Clinically severe CACNA1A alleles affect synaptic function and neurodegeneration differentially.</title>
        <authorList>
            <consortium name="Members of the UDN"/>
            <person name="Luo X."/>
            <person name="Rosenfeld J.A."/>
            <person name="Yamamoto S."/>
            <person name="Harel T."/>
            <person name="Zuo Z."/>
            <person name="Hall M."/>
            <person name="Wierenga K.J."/>
            <person name="Pastore M.T."/>
            <person name="Bartholomew D."/>
            <person name="Delgado M.R."/>
            <person name="Rotenberg J."/>
            <person name="Lewis R.A."/>
            <person name="Emrick L."/>
            <person name="Bacino C.A."/>
            <person name="Eldomery M.K."/>
            <person name="Coban Akdemir Z."/>
            <person name="Xia F."/>
            <person name="Yang Y."/>
            <person name="Lalani S.R."/>
            <person name="Lotze T."/>
            <person name="Lupski J.R."/>
            <person name="Lee B."/>
            <person name="Bellen H.J."/>
            <person name="Wangler M.F."/>
        </authorList>
    </citation>
    <scope>VARIANTS 284-LEU--CYS-1851 DEL AND GLU-989 DELINS LYS-LYS</scope>
    <scope>CHARACTERIZATION OF VARIANTS 284-LEU--CYS-1851 DEL AND LYS-989</scope>
    <scope>MUTAGENESIS OF ARG-1196 AND ARG-1205</scope>
    <scope>FUNCTION</scope>
</reference>
<name>CAC1A_DROME</name>
<keyword id="KW-0002">3D-structure</keyword>
<keyword id="KW-0025">Alternative splicing</keyword>
<keyword id="KW-0106">Calcium</keyword>
<keyword id="KW-0107">Calcium channel</keyword>
<keyword id="KW-0109">Calcium transport</keyword>
<keyword id="KW-0217">Developmental protein</keyword>
<keyword id="KW-0325">Glycoprotein</keyword>
<keyword id="KW-0407">Ion channel</keyword>
<keyword id="KW-0406">Ion transport</keyword>
<keyword id="KW-0472">Membrane</keyword>
<keyword id="KW-0479">Metal-binding</keyword>
<keyword id="KW-0597">Phosphoprotein</keyword>
<keyword id="KW-1185">Reference proteome</keyword>
<keyword id="KW-0677">Repeat</keyword>
<keyword id="KW-0691">RNA editing</keyword>
<keyword id="KW-0812">Transmembrane</keyword>
<keyword id="KW-1133">Transmembrane helix</keyword>
<keyword id="KW-0813">Transport</keyword>
<keyword id="KW-0851">Voltage-gated channel</keyword>
<comment type="function">
    <text evidence="2 8 9 11">Voltage-sensitive calcium channels (VSCC) mediate the entry of calcium ions into excitable cells and are also involved in a variety of calcium-dependent processes, including muscle contraction, neurotransmitter release, gene expression, cell motility, cell division and cell death (By similarity). Probably encodes a dihydropyridine-insensitive current. Vital for survival to adulthood.</text>
</comment>
<comment type="subcellular location">
    <subcellularLocation>
        <location evidence="12">Membrane</location>
        <topology>Multi-pass membrane protein</topology>
    </subcellularLocation>
</comment>
<comment type="alternative products">
    <event type="alternative splicing"/>
    <isoform>
        <id>P91645-1</id>
        <name>E</name>
        <sequence type="displayed"/>
    </isoform>
    <isoform>
        <id>P91645-2</id>
        <name>A</name>
        <sequence type="described" ref="VSP_012741"/>
    </isoform>
    <isoform>
        <id>P91645-3</id>
        <name>B</name>
        <sequence type="described" ref="VSP_000952"/>
    </isoform>
    <isoform>
        <id>P91645-4</id>
        <name>C</name>
        <sequence type="described" ref="VSP_000953"/>
    </isoform>
    <isoform>
        <id>P91645-5</id>
        <name>D</name>
        <sequence type="described" ref="VSP_000952 VSP_000953 VSP_012741"/>
    </isoform>
    <isoform>
        <id>P91645-6</id>
        <name>F</name>
        <sequence type="described" ref="VSP_000952 VSP_000953"/>
    </isoform>
    <text evidence="7 10">At least 2 regions (Exon IS4 and Exon I/II) undergo alternative splicing. The total number of isoforms is currently not known.</text>
</comment>
<comment type="tissue specificity">
    <text evidence="9">Expressed widely in the embryonic nervous system.</text>
</comment>
<comment type="developmental stage">
    <text evidence="9">Expression peaks in the first larval instar, midpupal, and late pupal stages. In late-stage embryos, it is expressed preferentially in the nervous system.</text>
</comment>
<comment type="domain">
    <text>Each of the four internal repeats contains five hydrophobic transmembrane segments (S1, S2, S3, S5, S6) and one positively charged transmembrane segment (S4). S4 segments probably represent the voltage-sensor and are characterized by a series of positively charged amino acids at every third position.</text>
</comment>
<comment type="RNA editing" locationType="Undetermined">
    <text evidence="6">Partially edited. 11 sites are edited by Adar.</text>
</comment>
<comment type="miscellaneous">
    <molecule>Isoform E</molecule>
    <text>Has exons IS4B and I/IIA.</text>
</comment>
<comment type="miscellaneous">
    <molecule>Isoform A</molecule>
    <text evidence="12">Has exons IS4B and I/IIA.</text>
</comment>
<comment type="miscellaneous">
    <molecule>Isoform B</molecule>
    <text evidence="12">Has exons IS4A and I/IIA.</text>
</comment>
<comment type="miscellaneous">
    <molecule>Isoform C</molecule>
    <text evidence="12">Has exons IS4B and I/IIB.</text>
</comment>
<comment type="miscellaneous">
    <molecule>Isoform D</molecule>
    <text evidence="12">Has exons IS4A and I/IIB.</text>
</comment>
<comment type="miscellaneous">
    <molecule>Isoform F</molecule>
    <text evidence="12">Has exons IS4A and I/IIB.</text>
</comment>
<comment type="similarity">
    <text evidence="12">Belongs to the calcium channel alpha-1 subunit (TC 1.A.1.11) family.</text>
</comment>
<feature type="chain" id="PRO_0000053959" description="Voltage-dependent calcium channel type A subunit alpha-1">
    <location>
        <begin position="1"/>
        <end position="1851"/>
    </location>
</feature>
<feature type="topological domain" description="Cytoplasmic" evidence="3">
    <location>
        <begin position="1"/>
        <end position="38"/>
    </location>
</feature>
<feature type="transmembrane region" description="Helical; Name=S1 of repeat I" evidence="3">
    <location>
        <begin position="39"/>
        <end position="57"/>
    </location>
</feature>
<feature type="topological domain" description="Extracellular" evidence="3">
    <location>
        <begin position="58"/>
        <end position="75"/>
    </location>
</feature>
<feature type="transmembrane region" description="Helical; Name=S2 of repeat I" evidence="3">
    <location>
        <begin position="76"/>
        <end position="95"/>
    </location>
</feature>
<feature type="topological domain" description="Cytoplasmic" evidence="3">
    <location>
        <begin position="96"/>
        <end position="107"/>
    </location>
</feature>
<feature type="transmembrane region" description="Helical; Name=S3 of repeat I" evidence="3">
    <location>
        <begin position="108"/>
        <end position="128"/>
    </location>
</feature>
<feature type="topological domain" description="Extracellular" evidence="3">
    <location>
        <begin position="129"/>
        <end position="133"/>
    </location>
</feature>
<feature type="transmembrane region" description="Helical; Name=S4 of repeat I" evidence="3">
    <location>
        <begin position="134"/>
        <end position="152"/>
    </location>
</feature>
<feature type="topological domain" description="Cytoplasmic" evidence="3">
    <location>
        <begin position="153"/>
        <end position="171"/>
    </location>
</feature>
<feature type="transmembrane region" description="Helical; Name=S5 of repeat I" evidence="3">
    <location>
        <begin position="172"/>
        <end position="191"/>
    </location>
</feature>
<feature type="topological domain" description="Extracellular" evidence="3">
    <location>
        <begin position="192"/>
        <end position="288"/>
    </location>
</feature>
<feature type="transmembrane region" description="Helical; Name=S6 of repeat I" evidence="3">
    <location>
        <begin position="289"/>
        <end position="313"/>
    </location>
</feature>
<feature type="topological domain" description="Cytoplasmic" evidence="3">
    <location>
        <begin position="314"/>
        <end position="441"/>
    </location>
</feature>
<feature type="transmembrane region" description="Helical; Name=S1 of repeat II" evidence="3">
    <location>
        <begin position="442"/>
        <end position="460"/>
    </location>
</feature>
<feature type="topological domain" description="Extracellular" evidence="3">
    <location>
        <begin position="461"/>
        <end position="475"/>
    </location>
</feature>
<feature type="transmembrane region" description="Helical; Name=S2 of repeat II" evidence="3">
    <location>
        <begin position="476"/>
        <end position="495"/>
    </location>
</feature>
<feature type="topological domain" description="Cytoplasmic" evidence="3">
    <location>
        <begin position="496"/>
        <end position="503"/>
    </location>
</feature>
<feature type="transmembrane region" description="Helical; Name=S3 of repeat II" evidence="3">
    <location>
        <begin position="504"/>
        <end position="522"/>
    </location>
</feature>
<feature type="topological domain" description="Extracellular" evidence="3">
    <location>
        <begin position="523"/>
        <end position="531"/>
    </location>
</feature>
<feature type="transmembrane region" description="Helical; Name=S4 of repeat II" evidence="3">
    <location>
        <begin position="532"/>
        <end position="550"/>
    </location>
</feature>
<feature type="topological domain" description="Cytoplasmic" evidence="3">
    <location>
        <begin position="551"/>
        <end position="569"/>
    </location>
</feature>
<feature type="transmembrane region" description="Helical; Name=S5 of repeat II" evidence="3">
    <location>
        <begin position="570"/>
        <end position="589"/>
    </location>
</feature>
<feature type="topological domain" description="Extracellular" evidence="3">
    <location>
        <begin position="590"/>
        <end position="642"/>
    </location>
</feature>
<feature type="transmembrane region" description="Helical; Name=S6 of repeat II" evidence="3">
    <location>
        <begin position="643"/>
        <end position="667"/>
    </location>
</feature>
<feature type="topological domain" description="Cytoplasmic" evidence="3">
    <location>
        <begin position="668"/>
        <end position="767"/>
    </location>
</feature>
<feature type="transmembrane region" description="Helical; Name=S1 of repeat III" evidence="3">
    <location>
        <begin position="768"/>
        <end position="786"/>
    </location>
</feature>
<feature type="topological domain" description="Extracellular" evidence="3">
    <location>
        <begin position="787"/>
        <end position="802"/>
    </location>
</feature>
<feature type="transmembrane region" description="Helical; Name=S2 of repeat III" evidence="3">
    <location>
        <begin position="803"/>
        <end position="822"/>
    </location>
</feature>
<feature type="topological domain" description="Cytoplasmic" evidence="3">
    <location>
        <begin position="823"/>
        <end position="834"/>
    </location>
</feature>
<feature type="transmembrane region" description="Helical; Name=S3 of repeat III" evidence="3">
    <location>
        <begin position="835"/>
        <end position="853"/>
    </location>
</feature>
<feature type="topological domain" description="Extracellular" evidence="3">
    <location>
        <begin position="854"/>
        <end position="866"/>
    </location>
</feature>
<feature type="transmembrane region" description="Helical; Name=S4 of repeat III" evidence="3">
    <location>
        <begin position="867"/>
        <end position="885"/>
    </location>
</feature>
<feature type="topological domain" description="Cytoplasmic" evidence="3">
    <location>
        <begin position="886"/>
        <end position="904"/>
    </location>
</feature>
<feature type="transmembrane region" description="Helical; Name=S5 of repeat III" evidence="3">
    <location>
        <begin position="905"/>
        <end position="924"/>
    </location>
</feature>
<feature type="topological domain" description="Extracellular" evidence="3">
    <location>
        <begin position="925"/>
        <end position="1013"/>
    </location>
</feature>
<feature type="transmembrane region" description="Helical; Name=S6 of repeat III" evidence="3">
    <location>
        <begin position="1014"/>
        <end position="1038"/>
    </location>
</feature>
<feature type="topological domain" description="Cytoplasmic" evidence="3">
    <location>
        <begin position="1039"/>
        <end position="1093"/>
    </location>
</feature>
<feature type="transmembrane region" description="Helical; Name=S1 of repeat IV" evidence="3">
    <location>
        <begin position="1094"/>
        <end position="1122"/>
    </location>
</feature>
<feature type="topological domain" description="Extracellular" evidence="3">
    <location>
        <begin position="1123"/>
        <end position="1127"/>
    </location>
</feature>
<feature type="transmembrane region" description="Helical; Name=S2 of repeat IV" evidence="3">
    <location>
        <begin position="1128"/>
        <end position="1147"/>
    </location>
</feature>
<feature type="topological domain" description="Cytoplasmic" evidence="3">
    <location>
        <begin position="1148"/>
        <end position="1155"/>
    </location>
</feature>
<feature type="transmembrane region" description="Helical; Name=S3 of repeat IV" evidence="3">
    <location>
        <begin position="1156"/>
        <end position="1174"/>
    </location>
</feature>
<feature type="topological domain" description="Extracellular" evidence="3">
    <location>
        <begin position="1175"/>
        <end position="1184"/>
    </location>
</feature>
<feature type="transmembrane region" description="Helical; Name=S4 of repeat IV" evidence="3">
    <location>
        <begin position="1185"/>
        <end position="1203"/>
    </location>
</feature>
<feature type="topological domain" description="Cytoplasmic" evidence="3">
    <location>
        <begin position="1204"/>
        <end position="1222"/>
    </location>
</feature>
<feature type="transmembrane region" description="Helical; Name=S5 of repeat IV" evidence="3">
    <location>
        <begin position="1223"/>
        <end position="1242"/>
    </location>
</feature>
<feature type="topological domain" description="Extracellular" evidence="3">
    <location>
        <begin position="1243"/>
        <end position="1308"/>
    </location>
</feature>
<feature type="transmembrane region" description="Helical; Name=S6 of repeat IV" evidence="3">
    <location>
        <begin position="1309"/>
        <end position="1333"/>
    </location>
</feature>
<feature type="topological domain" description="Cytoplasmic" evidence="3">
    <location>
        <begin position="1334"/>
        <end position="1851"/>
    </location>
</feature>
<feature type="repeat" description="I">
    <location>
        <begin position="25"/>
        <end position="316"/>
    </location>
</feature>
<feature type="repeat" description="II">
    <location>
        <begin position="427"/>
        <end position="670"/>
    </location>
</feature>
<feature type="repeat" description="III">
    <location>
        <begin position="762"/>
        <end position="1049"/>
    </location>
</feature>
<feature type="repeat" description="IV">
    <location>
        <begin position="1086"/>
        <end position="1347"/>
    </location>
</feature>
<feature type="domain" description="EF-hand" evidence="4">
    <location>
        <begin position="1353"/>
        <end position="1388"/>
    </location>
</feature>
<feature type="region of interest" description="Disordered" evidence="5">
    <location>
        <begin position="381"/>
        <end position="417"/>
    </location>
</feature>
<feature type="region of interest" description="Disordered" evidence="5">
    <location>
        <begin position="710"/>
        <end position="741"/>
    </location>
</feature>
<feature type="region of interest" description="Phenylalkylamine binding" evidence="1">
    <location>
        <begin position="1306"/>
        <end position="1348"/>
    </location>
</feature>
<feature type="region of interest" description="Disordered" evidence="5">
    <location>
        <begin position="1513"/>
        <end position="1572"/>
    </location>
</feature>
<feature type="region of interest" description="Disordered" evidence="5">
    <location>
        <begin position="1588"/>
        <end position="1653"/>
    </location>
</feature>
<feature type="region of interest" description="Disordered" evidence="5">
    <location>
        <begin position="1685"/>
        <end position="1764"/>
    </location>
</feature>
<feature type="region of interest" description="Disordered" evidence="5">
    <location>
        <begin position="1823"/>
        <end position="1851"/>
    </location>
</feature>
<feature type="compositionally biased region" description="Acidic residues" evidence="5">
    <location>
        <begin position="395"/>
        <end position="406"/>
    </location>
</feature>
<feature type="compositionally biased region" description="Basic residues" evidence="5">
    <location>
        <begin position="1589"/>
        <end position="1600"/>
    </location>
</feature>
<feature type="compositionally biased region" description="Low complexity" evidence="5">
    <location>
        <begin position="1604"/>
        <end position="1619"/>
    </location>
</feature>
<feature type="compositionally biased region" description="Polar residues" evidence="5">
    <location>
        <begin position="1637"/>
        <end position="1649"/>
    </location>
</feature>
<feature type="compositionally biased region" description="Polar residues" evidence="5">
    <location>
        <begin position="1698"/>
        <end position="1710"/>
    </location>
</feature>
<feature type="compositionally biased region" description="Basic and acidic residues" evidence="5">
    <location>
        <begin position="1734"/>
        <end position="1764"/>
    </location>
</feature>
<feature type="binding site" evidence="12">
    <location>
        <position position="1366"/>
    </location>
    <ligand>
        <name>Ca(2+)</name>
        <dbReference type="ChEBI" id="CHEBI:29108"/>
    </ligand>
</feature>
<feature type="binding site" evidence="12">
    <location>
        <position position="1368"/>
    </location>
    <ligand>
        <name>Ca(2+)</name>
        <dbReference type="ChEBI" id="CHEBI:29108"/>
    </ligand>
</feature>
<feature type="binding site" evidence="12">
    <location>
        <position position="1370"/>
    </location>
    <ligand>
        <name>Ca(2+)</name>
        <dbReference type="ChEBI" id="CHEBI:29108"/>
    </ligand>
</feature>
<feature type="binding site" evidence="12">
    <location>
        <position position="1372"/>
    </location>
    <ligand>
        <name>Ca(2+)</name>
        <dbReference type="ChEBI" id="CHEBI:29108"/>
    </ligand>
</feature>
<feature type="binding site" evidence="12">
    <location>
        <position position="1377"/>
    </location>
    <ligand>
        <name>Ca(2+)</name>
        <dbReference type="ChEBI" id="CHEBI:29108"/>
    </ligand>
</feature>
<feature type="site" description="Calcium ion selectivity and permeability">
    <location>
        <position position="271"/>
    </location>
</feature>
<feature type="site" description="Calcium ion selectivity and permeability">
    <location>
        <position position="621"/>
    </location>
</feature>
<feature type="site" description="Calcium ion selectivity and permeability">
    <location>
        <position position="989"/>
    </location>
</feature>
<feature type="site" description="Calcium ion selectivity and permeability">
    <location>
        <position position="1281"/>
    </location>
</feature>
<feature type="glycosylation site" description="N-linked (GlcNAc...) asparagine" evidence="3">
    <location>
        <position position="234"/>
    </location>
</feature>
<feature type="glycosylation site" description="N-linked (GlcNAc...) asparagine" evidence="3">
    <location>
        <position position="235"/>
    </location>
</feature>
<feature type="glycosylation site" description="N-linked (GlcNAc...) asparagine" evidence="3">
    <location>
        <position position="865"/>
    </location>
</feature>
<feature type="splice variant" id="VSP_000952" description="In isoform F, isoform D and isoform B." evidence="12">
    <original>FMTQYPQIGPEVDLRTLRAIRVLRPLKLVSG</original>
    <variation>AMTIFAEANIDVDLRMLRSFRVLRPLKLVSR</variation>
    <location>
        <begin position="121"/>
        <end position="151"/>
    </location>
</feature>
<feature type="splice variant" id="VSP_000953" description="In isoform F, isoform D and isoform C." evidence="12">
    <original>SNERNRVERRMEFQKCRFRAMFQTAMVSYLDWITQ</original>
    <variation>AKEREKVENRQEFLKLRRQQQLERELNGYVEWICK</variation>
    <location>
        <begin position="317"/>
        <end position="351"/>
    </location>
</feature>
<feature type="splice variant" id="VSP_012741" description="In isoform A and isoform D." evidence="12">
    <location>
        <begin position="1181"/>
        <end position="1183"/>
    </location>
</feature>
<feature type="sequence variant" description="In cac-J; lethal at an embryonic stage; loss of synaptic transmission." evidence="8">
    <location>
        <begin position="284"/>
        <end position="1851"/>
    </location>
</feature>
<feature type="sequence variant" description="In cac-F; lethal at the larval stage 3; loss of synaptic transmission." evidence="8">
    <original>E</original>
    <variation>K</variation>
    <location>
        <position position="989"/>
    </location>
</feature>
<feature type="sequence variant" description="In cac-S; exhibits defects in the patterning of courtship lovesong and a subtle abnormality in visual physiology." evidence="11">
    <original>F</original>
    <variation>I</variation>
    <location>
        <position position="1029"/>
    </location>
</feature>
<feature type="mutagenesis site" description="Homolog of Q-1664 variant in human. Partially rescues the cac-F and cac-J lethal phenotypes. Does not rescue the loss of synaptic transmission cac-F and cac-J variants. No effect on photoreceptor morphology." evidence="8">
    <original>R</original>
    <variation>Q</variation>
    <location>
        <position position="1196"/>
    </location>
</feature>
<feature type="mutagenesis site" description="Homolog of P-1673 variant in human. Does not rescue cac-F and cac-J lethal phenotypes. Highly increases amplitude on the synaptic transmission. Induces severe neurodegeneration in both photoreceptor cell bodies and terminals." evidence="8">
    <original>R</original>
    <variation>P</variation>
    <location>
        <position position="1205"/>
    </location>
</feature>
<feature type="sequence conflict" description="In Ref. 1; AAC47406." evidence="12" ref="1">
    <original>S</original>
    <variation>G</variation>
    <location>
        <position position="514"/>
    </location>
</feature>
<feature type="sequence conflict" description="In Ref. 1; AAC47406." evidence="12" ref="1">
    <original>I</original>
    <variation>M</variation>
    <location>
        <position position="815"/>
    </location>
</feature>
<feature type="sequence conflict" description="In Ref. 1; AAC47406." evidence="12" ref="1">
    <original>N</original>
    <variation>S</variation>
    <location>
        <position position="839"/>
    </location>
</feature>
<feature type="sequence conflict" description="In Ref. 1; AAC47406." evidence="12" ref="1">
    <original>N</original>
    <variation>S</variation>
    <location>
        <position position="906"/>
    </location>
</feature>
<feature type="sequence conflict" description="In Ref. 1; AAC47406." evidence="12" ref="1">
    <original>S</original>
    <variation>G</variation>
    <location>
        <position position="937"/>
    </location>
</feature>
<feature type="sequence conflict" description="In Ref. 1; AAC47406." evidence="12" ref="1">
    <original>M</original>
    <variation>V</variation>
    <location>
        <position position="1016"/>
    </location>
</feature>
<feature type="sequence conflict" description="In Ref. 1; AAC47406." evidence="12" ref="1">
    <original>N</original>
    <variation>S</variation>
    <location>
        <position position="1185"/>
    </location>
</feature>
<feature type="sequence conflict" description="In Ref. 1; AAC47406." evidence="12" ref="1">
    <original>Q</original>
    <variation>H</variation>
    <location>
        <position position="1269"/>
    </location>
</feature>
<feature type="sequence conflict" description="In Ref. 1; AAC47406." evidence="12" ref="1">
    <original>N</original>
    <variation>G</variation>
    <location>
        <position position="1368"/>
    </location>
</feature>
<feature type="sequence conflict" description="In Ref. 1; AAC47406." evidence="12" ref="1">
    <original>N</original>
    <variation>D</variation>
    <location>
        <position position="1580"/>
    </location>
</feature>
<feature type="sequence conflict" description="In Ref. 1; AAC47406." evidence="12" ref="1">
    <original>R</original>
    <variation>G</variation>
    <location>
        <position position="1602"/>
    </location>
</feature>
<sequence>MGGPKKEENPPGGGPTSLFILTEDNPIRKYTRFIIEWPPFEYAVLLTIIANCVVLALEEHLPGGDKTVLAQKLEKTEAYFLCIFCVEASLKILALGLVLHKHSYLRNIWNIMDFFVVVTGFMTQYPQIGPEVDLRTLRAIRVLRPLKLVSGIPSLQVVLKSIIKAMAPLLQIGLLVLFAIVIFAIIGLEFYSGALHKTCYSLEDPNKLVKEGESETPCNTDNILEKATGSFVCNNTTSMCLEKWEGPNSGITSFDNIGFAMLTVFQCITMEGWTAILYWTNDALGSAFNWIYFVPLIVIGSFFMLNLVLGVLSGEFSNERNRVERRMEFQKCRFRAMFQTAMVSYLDWITQAEEVILAEERTTEEEKMHIMEARRRNAAKRKKLKSLGKSKSTDTEEEEAEEDYGDDGYLKTRSKPQGSCTGFWRAEKRFRFWIRHTVKTQWFYWFVIVLVFLNTVCVAVEHYGQPSFLTEFLYYAEFIFLGLFMSEMFIKMYALGPRIYFESSFNRFDCVVISGSIFEVIWSEVKGGSFGLSVLRALRLLRIFKVTKYWSSLRNLVISLLNSMRSIISLLFLLFLFILIFALLGMQLFGGQFNLPGGTPETNFNTFPIALLTVFQILTGEDWNEVMYQGIISQGGAQKGMIYSIYFIVLVLFGNYTLLNVFLAIAVDNLANAQELTAAEEEQVEEDKEKQLQELEKEMEALQADGVHVENGDGAVAPSKSKGKKKEEEKKEEEEVTEGPKPMLPYSSMFILSPTNPIRRGAHWVVNLPYFDFFIMVVISMSSIALAAEDPVRENSRRNKILNYFDYAFTGVFTIEMLLKIVDLGVILHPGSYLREFWNIMDAVVVICAAVSFGFDMSGSSAGQNLSTIKSLRVLRVLRPLKTIKRVPKLKAVFDCVVNSLKNVVNILIVYILFQFIFSVIGVQLFNGKFFYCTDESKHTSAECQGSYFKYEEDELLPKQELRVWKPRAFHYDNVAAAMLTLFAVQTGEGWPQVLQHSMAATYEDRGPIQNFRIEMSIFYIVYFIVFPFFFVNIFVALIIITFQEQGEAELQDGEIDKNQKSCIDFTIGARPLERYMPKNRNTFKYKVWRIVVSTPFEYFIMMLIVFNTLLLMMKYHNQGDMYEKSLKYINMGFTGMFSVETVLKIIGFGVKNFFKDPWNIFDLITVLGSIVDALWMEFGHDDSNSINVGFLRLFRAARLIKLLRQGYTIRILLWTFVQSFKALPYVCLLIAMLFFIYAIIGMQVFGNIKLGTVENSITRHNNFQSFIQGVMLLFRCATGEAWPNIMLACLKGKACDDDAEKAPGEYCGSTLAYAYFVSFIFFCSFLMLNLFVAVIMDNFDYLTRDSSILGAHHLDEFVRIWAEYDPNATGKIHYTEMYDMLKNMDPPLGFGNKCPNRLAYKKLIRMNMPLDDELRVQFTTTLFALIRENLSIKMRAPEEMDQADMELRETITNIWPLQAKKMLNLLVPPSDQLNKGKLSVGKIYAGFLILESWRSTRFGQLDSGMPMLELQDASRHPSQESLTGADAGHLHPGHSYMNGHRRSPSLRHNGSPLARSPSPRRRGHQYIHHDIGFSDTVSNVVEMVKETRHPRHGNSHPRYPRGSWSASTSPARSPSPSRYGGHLSRSKRTQLPYPTYGTTSLCQRSRSPSPARLQEMRERDRLGYGIDMGVTHVQHSYPTLASRRAGIGRRLPPTPSKPSTLQLKPTNINFPKLNASPTHTHHSTPHSVHSLPHHRDLLRDPRDMYYSSRERERDRERLRDRDRDRDRDRLHEYDLRYEYRDRERELYERERDREREVERERLEYIAPLSFEQALAMGRTGRVLPSPVLNGFKPKSGLNPRHSDSDEEDWC</sequence>
<dbReference type="EMBL" id="U55776">
    <property type="protein sequence ID" value="AAC47406.1"/>
    <property type="molecule type" value="mRNA"/>
</dbReference>
<dbReference type="EMBL" id="AE014298">
    <property type="protein sequence ID" value="AAF48120.2"/>
    <property type="molecule type" value="Genomic_DNA"/>
</dbReference>
<dbReference type="EMBL" id="AE014298">
    <property type="protein sequence ID" value="AAS65322.1"/>
    <property type="molecule type" value="Genomic_DNA"/>
</dbReference>
<dbReference type="EMBL" id="AE014298">
    <property type="protein sequence ID" value="AAS65323.1"/>
    <property type="molecule type" value="Genomic_DNA"/>
</dbReference>
<dbReference type="EMBL" id="AE014298">
    <property type="protein sequence ID" value="AAS65324.1"/>
    <property type="molecule type" value="Genomic_DNA"/>
</dbReference>
<dbReference type="EMBL" id="AE014298">
    <property type="protein sequence ID" value="AAS65325.1"/>
    <property type="molecule type" value="Genomic_DNA"/>
</dbReference>
<dbReference type="EMBL" id="AE014298">
    <property type="protein sequence ID" value="AAS65326.1"/>
    <property type="molecule type" value="Genomic_DNA"/>
</dbReference>
<dbReference type="EMBL" id="U88664">
    <property type="protein sequence ID" value="AAB53271.1"/>
    <property type="molecule type" value="Genomic_DNA"/>
</dbReference>
<dbReference type="EMBL" id="U88665">
    <property type="protein sequence ID" value="AAB53272.1"/>
    <property type="molecule type" value="Genomic_DNA"/>
</dbReference>
<dbReference type="PIR" id="T13980">
    <property type="entry name" value="T13980"/>
</dbReference>
<dbReference type="RefSeq" id="NP_001245639.1">
    <molecule id="P91645-1"/>
    <property type="nucleotide sequence ID" value="NM_001258710.2"/>
</dbReference>
<dbReference type="RefSeq" id="NP_511133.2">
    <molecule id="P91645-2"/>
    <property type="nucleotide sequence ID" value="NM_078578.5"/>
</dbReference>
<dbReference type="RefSeq" id="NP_996416.1">
    <molecule id="P91645-6"/>
    <property type="nucleotide sequence ID" value="NM_206693.5"/>
</dbReference>
<dbReference type="RefSeq" id="NP_996417.1">
    <molecule id="P91645-1"/>
    <property type="nucleotide sequence ID" value="NM_206694.4"/>
</dbReference>
<dbReference type="RefSeq" id="NP_996418.1">
    <molecule id="P91645-5"/>
    <property type="nucleotide sequence ID" value="NM_206695.4"/>
</dbReference>
<dbReference type="RefSeq" id="NP_996419.1">
    <property type="nucleotide sequence ID" value="NM_206696.5"/>
</dbReference>
<dbReference type="RefSeq" id="NP_996420.1">
    <property type="nucleotide sequence ID" value="NM_206697.4"/>
</dbReference>
<dbReference type="PDB" id="4Z89">
    <property type="method" value="X-ray"/>
    <property type="resolution" value="2.64 A"/>
    <property type="chains" value="a/b/c/d/e/f/g/h/i/j=1688-1702"/>
</dbReference>
<dbReference type="PDB" id="4Z8A">
    <property type="method" value="X-ray"/>
    <property type="resolution" value="1.76 A"/>
    <property type="chains" value="B=1688-1702"/>
</dbReference>
<dbReference type="PDBsum" id="4Z89"/>
<dbReference type="PDBsum" id="4Z8A"/>
<dbReference type="SMR" id="P91645"/>
<dbReference type="BioGRID" id="58563">
    <property type="interactions" value="20"/>
</dbReference>
<dbReference type="FunCoup" id="P91645">
    <property type="interactions" value="172"/>
</dbReference>
<dbReference type="IntAct" id="P91645">
    <property type="interactions" value="5"/>
</dbReference>
<dbReference type="STRING" id="7227.FBpp0423194"/>
<dbReference type="GlyCosmos" id="P91645">
    <property type="glycosylation" value="3 sites, No reported glycans"/>
</dbReference>
<dbReference type="GlyGen" id="P91645">
    <property type="glycosylation" value="4 sites"/>
</dbReference>
<dbReference type="PaxDb" id="7227-FBpp0298326"/>
<dbReference type="EnsemblMetazoa" id="FBtr0307318">
    <molecule id="P91645-2"/>
    <property type="protein sequence ID" value="FBpp0298319"/>
    <property type="gene ID" value="FBgn0263111"/>
</dbReference>
<dbReference type="EnsemblMetazoa" id="FBtr0307319">
    <molecule id="P91645-5"/>
    <property type="protein sequence ID" value="FBpp0298320"/>
    <property type="gene ID" value="FBgn0263111"/>
</dbReference>
<dbReference type="EnsemblMetazoa" id="FBtr0307320">
    <molecule id="P91645-6"/>
    <property type="protein sequence ID" value="FBpp0298321"/>
    <property type="gene ID" value="FBgn0263111"/>
</dbReference>
<dbReference type="EnsemblMetazoa" id="FBtr0307322">
    <molecule id="P91645-1"/>
    <property type="protein sequence ID" value="FBpp0298323"/>
    <property type="gene ID" value="FBgn0263111"/>
</dbReference>
<dbReference type="EnsemblMetazoa" id="FBtr0308609">
    <molecule id="P91645-1"/>
    <property type="protein sequence ID" value="FBpp0300833"/>
    <property type="gene ID" value="FBgn0263111"/>
</dbReference>
<dbReference type="GeneID" id="32158"/>
<dbReference type="KEGG" id="dme:Dmel_CG43368"/>
<dbReference type="AGR" id="FB:FBgn0263111"/>
<dbReference type="CTD" id="12285"/>
<dbReference type="FlyBase" id="FBgn0263111">
    <property type="gene designation" value="cac"/>
</dbReference>
<dbReference type="VEuPathDB" id="VectorBase:FBgn0263111"/>
<dbReference type="eggNOG" id="KOG2301">
    <property type="taxonomic scope" value="Eukaryota"/>
</dbReference>
<dbReference type="GeneTree" id="ENSGT00940000170242"/>
<dbReference type="InParanoid" id="P91645"/>
<dbReference type="OrthoDB" id="431720at2759"/>
<dbReference type="PhylomeDB" id="P91645"/>
<dbReference type="Reactome" id="R-DME-112308">
    <property type="pathway name" value="Presynaptic depolarization and calcium channel opening"/>
</dbReference>
<dbReference type="Reactome" id="R-DME-422356">
    <property type="pathway name" value="Regulation of insulin secretion"/>
</dbReference>
<dbReference type="BioGRID-ORCS" id="32158">
    <property type="hits" value="0 hits in 3 CRISPR screens"/>
</dbReference>
<dbReference type="EvolutionaryTrace" id="P91645"/>
<dbReference type="GenomeRNAi" id="32158"/>
<dbReference type="PRO" id="PR:P91645"/>
<dbReference type="Proteomes" id="UP000000803">
    <property type="component" value="Chromosome X"/>
</dbReference>
<dbReference type="Bgee" id="FBgn0263111">
    <property type="expression patterns" value="Expressed in leg muscle motor neuron in post-embryonic organism and 233 other cell types or tissues"/>
</dbReference>
<dbReference type="ExpressionAtlas" id="P91645">
    <property type="expression patterns" value="baseline and differential"/>
</dbReference>
<dbReference type="GO" id="GO:0016324">
    <property type="term" value="C:apical plasma membrane"/>
    <property type="evidence" value="ECO:0000314"/>
    <property type="project" value="FlyBase"/>
</dbReference>
<dbReference type="GO" id="GO:0016323">
    <property type="term" value="C:basolateral plasma membrane"/>
    <property type="evidence" value="ECO:0000314"/>
    <property type="project" value="FlyBase"/>
</dbReference>
<dbReference type="GO" id="GO:0031594">
    <property type="term" value="C:neuromuscular junction"/>
    <property type="evidence" value="ECO:0000315"/>
    <property type="project" value="FlyBase"/>
</dbReference>
<dbReference type="GO" id="GO:0048786">
    <property type="term" value="C:presynaptic active zone"/>
    <property type="evidence" value="ECO:0000314"/>
    <property type="project" value="FlyBase"/>
</dbReference>
<dbReference type="GO" id="GO:0005891">
    <property type="term" value="C:voltage-gated calcium channel complex"/>
    <property type="evidence" value="ECO:0000316"/>
    <property type="project" value="FlyBase"/>
</dbReference>
<dbReference type="GO" id="GO:0005509">
    <property type="term" value="F:calcium ion binding"/>
    <property type="evidence" value="ECO:0007669"/>
    <property type="project" value="InterPro"/>
</dbReference>
<dbReference type="GO" id="GO:0008331">
    <property type="term" value="F:high voltage-gated calcium channel activity"/>
    <property type="evidence" value="ECO:0000315"/>
    <property type="project" value="FlyBase"/>
</dbReference>
<dbReference type="GO" id="GO:0008332">
    <property type="term" value="F:low voltage-gated calcium channel activity"/>
    <property type="evidence" value="ECO:0000315"/>
    <property type="project" value="FlyBase"/>
</dbReference>
<dbReference type="GO" id="GO:0005245">
    <property type="term" value="F:voltage-gated calcium channel activity"/>
    <property type="evidence" value="ECO:0000314"/>
    <property type="project" value="FlyBase"/>
</dbReference>
<dbReference type="GO" id="GO:0008344">
    <property type="term" value="P:adult locomotory behavior"/>
    <property type="evidence" value="ECO:0000315"/>
    <property type="project" value="FlyBase"/>
</dbReference>
<dbReference type="GO" id="GO:0097352">
    <property type="term" value="P:autophagosome maturation"/>
    <property type="evidence" value="ECO:0000315"/>
    <property type="project" value="FlyBase"/>
</dbReference>
<dbReference type="GO" id="GO:0006914">
    <property type="term" value="P:autophagy"/>
    <property type="evidence" value="ECO:0000315"/>
    <property type="project" value="FlyBase"/>
</dbReference>
<dbReference type="GO" id="GO:0098703">
    <property type="term" value="P:calcium ion import across plasma membrane"/>
    <property type="evidence" value="ECO:0000318"/>
    <property type="project" value="GO_Central"/>
</dbReference>
<dbReference type="GO" id="GO:0070588">
    <property type="term" value="P:calcium ion transmembrane transport"/>
    <property type="evidence" value="ECO:0000315"/>
    <property type="project" value="FlyBase"/>
</dbReference>
<dbReference type="GO" id="GO:0006816">
    <property type="term" value="P:calcium ion transport"/>
    <property type="evidence" value="ECO:0000315"/>
    <property type="project" value="FlyBase"/>
</dbReference>
<dbReference type="GO" id="GO:0019722">
    <property type="term" value="P:calcium-mediated signaling"/>
    <property type="evidence" value="ECO:0000315"/>
    <property type="project" value="FlyBase"/>
</dbReference>
<dbReference type="GO" id="GO:0007268">
    <property type="term" value="P:chemical synaptic transmission"/>
    <property type="evidence" value="ECO:0000314"/>
    <property type="project" value="FlyBase"/>
</dbReference>
<dbReference type="GO" id="GO:0007619">
    <property type="term" value="P:courtship behavior"/>
    <property type="evidence" value="ECO:0000315"/>
    <property type="project" value="FlyBase"/>
</dbReference>
<dbReference type="GO" id="GO:0050908">
    <property type="term" value="P:detection of light stimulus involved in visual perception"/>
    <property type="evidence" value="ECO:0000315"/>
    <property type="project" value="FlyBase"/>
</dbReference>
<dbReference type="GO" id="GO:0042045">
    <property type="term" value="P:epithelial fluid transport"/>
    <property type="evidence" value="ECO:0000314"/>
    <property type="project" value="FlyBase"/>
</dbReference>
<dbReference type="GO" id="GO:0006887">
    <property type="term" value="P:exocytosis"/>
    <property type="evidence" value="ECO:0000315"/>
    <property type="project" value="FlyBase"/>
</dbReference>
<dbReference type="GO" id="GO:0045433">
    <property type="term" value="P:male courtship behavior, veined wing generated song production"/>
    <property type="evidence" value="ECO:0000315"/>
    <property type="project" value="FlyBase"/>
</dbReference>
<dbReference type="GO" id="GO:0070050">
    <property type="term" value="P:neuron cellular homeostasis"/>
    <property type="evidence" value="ECO:0000315"/>
    <property type="project" value="FlyBase"/>
</dbReference>
<dbReference type="GO" id="GO:0016322">
    <property type="term" value="P:neuron remodeling"/>
    <property type="evidence" value="ECO:0000315"/>
    <property type="project" value="FlyBase"/>
</dbReference>
<dbReference type="GO" id="GO:0007269">
    <property type="term" value="P:neurotransmitter secretion"/>
    <property type="evidence" value="ECO:0000315"/>
    <property type="project" value="FlyBase"/>
</dbReference>
<dbReference type="GO" id="GO:0007602">
    <property type="term" value="P:phototransduction"/>
    <property type="evidence" value="ECO:0000303"/>
    <property type="project" value="FlyBase"/>
</dbReference>
<dbReference type="GO" id="GO:0010524">
    <property type="term" value="P:positive regulation of calcium ion transport into cytosol"/>
    <property type="evidence" value="ECO:0000315"/>
    <property type="project" value="FlyBase"/>
</dbReference>
<dbReference type="GO" id="GO:0045887">
    <property type="term" value="P:positive regulation of synaptic assembly at neuromuscular junction"/>
    <property type="evidence" value="ECO:0000315"/>
    <property type="project" value="FlyBase"/>
</dbReference>
<dbReference type="GO" id="GO:0002027">
    <property type="term" value="P:regulation of heart rate"/>
    <property type="evidence" value="ECO:0000315"/>
    <property type="project" value="FlyBase"/>
</dbReference>
<dbReference type="GO" id="GO:0016057">
    <property type="term" value="P:regulation of membrane potential in photoreceptor cell"/>
    <property type="evidence" value="ECO:0000316"/>
    <property type="project" value="FlyBase"/>
</dbReference>
<dbReference type="GO" id="GO:0046928">
    <property type="term" value="P:regulation of neurotransmitter secretion"/>
    <property type="evidence" value="ECO:0000316"/>
    <property type="project" value="FlyBase"/>
</dbReference>
<dbReference type="GO" id="GO:0007632">
    <property type="term" value="P:visual behavior"/>
    <property type="evidence" value="ECO:0000303"/>
    <property type="project" value="FlyBase"/>
</dbReference>
<dbReference type="FunFam" id="1.20.120.350:FF:000001">
    <property type="entry name" value="Voltage-dependent L-type calcium channel subunit alpha"/>
    <property type="match status" value="1"/>
</dbReference>
<dbReference type="FunFam" id="1.20.120.350:FF:000043">
    <property type="entry name" value="Voltage-dependent L-type calcium channel subunit alpha"/>
    <property type="match status" value="1"/>
</dbReference>
<dbReference type="FunFam" id="1.10.238.10:FF:000063">
    <property type="entry name" value="Voltage-dependent N-type calcium channel subunit alpha"/>
    <property type="match status" value="1"/>
</dbReference>
<dbReference type="FunFam" id="1.10.287.70:FF:000059">
    <property type="entry name" value="Voltage-dependent N-type calcium channel subunit alpha"/>
    <property type="match status" value="1"/>
</dbReference>
<dbReference type="FunFam" id="1.10.287.70:FF:000068">
    <property type="entry name" value="Voltage-dependent N-type calcium channel subunit alpha"/>
    <property type="match status" value="1"/>
</dbReference>
<dbReference type="FunFam" id="1.20.120.350:FF:000011">
    <property type="entry name" value="Voltage-dependent N-type calcium channel subunit alpha"/>
    <property type="match status" value="1"/>
</dbReference>
<dbReference type="FunFam" id="1.20.120.350:FF:000013">
    <property type="entry name" value="Voltage-dependent N-type calcium channel subunit alpha"/>
    <property type="match status" value="1"/>
</dbReference>
<dbReference type="Gene3D" id="1.10.287.70">
    <property type="match status" value="4"/>
</dbReference>
<dbReference type="Gene3D" id="6.10.250.2500">
    <property type="match status" value="1"/>
</dbReference>
<dbReference type="Gene3D" id="1.10.238.10">
    <property type="entry name" value="EF-hand"/>
    <property type="match status" value="1"/>
</dbReference>
<dbReference type="Gene3D" id="1.20.120.350">
    <property type="entry name" value="Voltage-gated potassium channels. Chain C"/>
    <property type="match status" value="4"/>
</dbReference>
<dbReference type="InterPro" id="IPR002048">
    <property type="entry name" value="EF_hand_dom"/>
</dbReference>
<dbReference type="InterPro" id="IPR031649">
    <property type="entry name" value="GPHH_dom"/>
</dbReference>
<dbReference type="InterPro" id="IPR005821">
    <property type="entry name" value="Ion_trans_dom"/>
</dbReference>
<dbReference type="InterPro" id="IPR014873">
    <property type="entry name" value="VDCC_a1su_IQ"/>
</dbReference>
<dbReference type="InterPro" id="IPR050599">
    <property type="entry name" value="VDCC_alpha-1_subunit"/>
</dbReference>
<dbReference type="InterPro" id="IPR002077">
    <property type="entry name" value="VDCCAlpha1"/>
</dbReference>
<dbReference type="InterPro" id="IPR027359">
    <property type="entry name" value="Volt_channel_dom_sf"/>
</dbReference>
<dbReference type="PANTHER" id="PTHR45628">
    <property type="entry name" value="VOLTAGE-DEPENDENT CALCIUM CHANNEL TYPE A SUBUNIT ALPHA-1"/>
    <property type="match status" value="1"/>
</dbReference>
<dbReference type="PANTHER" id="PTHR45628:SF7">
    <property type="entry name" value="VOLTAGE-DEPENDENT CALCIUM CHANNEL TYPE A SUBUNIT ALPHA-1"/>
    <property type="match status" value="1"/>
</dbReference>
<dbReference type="Pfam" id="PF08763">
    <property type="entry name" value="Ca_chan_IQ"/>
    <property type="match status" value="1"/>
</dbReference>
<dbReference type="Pfam" id="PF16905">
    <property type="entry name" value="GPHH"/>
    <property type="match status" value="1"/>
</dbReference>
<dbReference type="Pfam" id="PF00520">
    <property type="entry name" value="Ion_trans"/>
    <property type="match status" value="4"/>
</dbReference>
<dbReference type="PRINTS" id="PR00167">
    <property type="entry name" value="CACHANNEL"/>
</dbReference>
<dbReference type="SMART" id="SM01062">
    <property type="entry name" value="Ca_chan_IQ"/>
    <property type="match status" value="1"/>
</dbReference>
<dbReference type="SUPFAM" id="SSF81324">
    <property type="entry name" value="Voltage-gated potassium channels"/>
    <property type="match status" value="4"/>
</dbReference>
<dbReference type="PROSITE" id="PS50222">
    <property type="entry name" value="EF_HAND_2"/>
    <property type="match status" value="1"/>
</dbReference>
<organism>
    <name type="scientific">Drosophila melanogaster</name>
    <name type="common">Fruit fly</name>
    <dbReference type="NCBI Taxonomy" id="7227"/>
    <lineage>
        <taxon>Eukaryota</taxon>
        <taxon>Metazoa</taxon>
        <taxon>Ecdysozoa</taxon>
        <taxon>Arthropoda</taxon>
        <taxon>Hexapoda</taxon>
        <taxon>Insecta</taxon>
        <taxon>Pterygota</taxon>
        <taxon>Neoptera</taxon>
        <taxon>Endopterygota</taxon>
        <taxon>Diptera</taxon>
        <taxon>Brachycera</taxon>
        <taxon>Muscomorpha</taxon>
        <taxon>Ephydroidea</taxon>
        <taxon>Drosophilidae</taxon>
        <taxon>Drosophila</taxon>
        <taxon>Sophophora</taxon>
    </lineage>
</organism>
<gene>
    <name type="primary">cac</name>
    <name type="synonym">nbA</name>
    <name type="synonym">nonB</name>
    <name type="ORF">CG43368</name>
</gene>
<protein>
    <recommendedName>
        <fullName>Voltage-dependent calcium channel type A subunit alpha-1</fullName>
    </recommendedName>
    <alternativeName>
        <fullName>Protein cacophony</fullName>
    </alternativeName>
    <alternativeName>
        <fullName>Protein nightblind A</fullName>
    </alternativeName>
    <alternativeName>
        <fullName>Protein no-on-transient B</fullName>
        <shortName>Dmca1A</shortName>
    </alternativeName>
</protein>